<proteinExistence type="evidence at transcript level"/>
<protein>
    <recommendedName>
        <fullName evidence="8">Probable prolyl 4-hydroxylase 9</fullName>
        <shortName evidence="7">AtP4H9</shortName>
        <ecNumber evidence="8">1.14.11.2</ecNumber>
    </recommendedName>
</protein>
<reference key="1">
    <citation type="journal article" date="1999" name="Nature">
        <title>Sequence and analysis of chromosome 4 of the plant Arabidopsis thaliana.</title>
        <authorList>
            <person name="Mayer K.F.X."/>
            <person name="Schueller C."/>
            <person name="Wambutt R."/>
            <person name="Murphy G."/>
            <person name="Volckaert G."/>
            <person name="Pohl T."/>
            <person name="Duesterhoeft A."/>
            <person name="Stiekema W."/>
            <person name="Entian K.-D."/>
            <person name="Terryn N."/>
            <person name="Harris B."/>
            <person name="Ansorge W."/>
            <person name="Brandt P."/>
            <person name="Grivell L.A."/>
            <person name="Rieger M."/>
            <person name="Weichselgartner M."/>
            <person name="de Simone V."/>
            <person name="Obermaier B."/>
            <person name="Mache R."/>
            <person name="Mueller M."/>
            <person name="Kreis M."/>
            <person name="Delseny M."/>
            <person name="Puigdomenech P."/>
            <person name="Watson M."/>
            <person name="Schmidtheini T."/>
            <person name="Reichert B."/>
            <person name="Portetelle D."/>
            <person name="Perez-Alonso M."/>
            <person name="Boutry M."/>
            <person name="Bancroft I."/>
            <person name="Vos P."/>
            <person name="Hoheisel J."/>
            <person name="Zimmermann W."/>
            <person name="Wedler H."/>
            <person name="Ridley P."/>
            <person name="Langham S.-A."/>
            <person name="McCullagh B."/>
            <person name="Bilham L."/>
            <person name="Robben J."/>
            <person name="van der Schueren J."/>
            <person name="Grymonprez B."/>
            <person name="Chuang Y.-J."/>
            <person name="Vandenbussche F."/>
            <person name="Braeken M."/>
            <person name="Weltjens I."/>
            <person name="Voet M."/>
            <person name="Bastiaens I."/>
            <person name="Aert R."/>
            <person name="Defoor E."/>
            <person name="Weitzenegger T."/>
            <person name="Bothe G."/>
            <person name="Ramsperger U."/>
            <person name="Hilbert H."/>
            <person name="Braun M."/>
            <person name="Holzer E."/>
            <person name="Brandt A."/>
            <person name="Peters S."/>
            <person name="van Staveren M."/>
            <person name="Dirkse W."/>
            <person name="Mooijman P."/>
            <person name="Klein Lankhorst R."/>
            <person name="Rose M."/>
            <person name="Hauf J."/>
            <person name="Koetter P."/>
            <person name="Berneiser S."/>
            <person name="Hempel S."/>
            <person name="Feldpausch M."/>
            <person name="Lamberth S."/>
            <person name="Van den Daele H."/>
            <person name="De Keyser A."/>
            <person name="Buysshaert C."/>
            <person name="Gielen J."/>
            <person name="Villarroel R."/>
            <person name="De Clercq R."/>
            <person name="van Montagu M."/>
            <person name="Rogers J."/>
            <person name="Cronin A."/>
            <person name="Quail M.A."/>
            <person name="Bray-Allen S."/>
            <person name="Clark L."/>
            <person name="Doggett J."/>
            <person name="Hall S."/>
            <person name="Kay M."/>
            <person name="Lennard N."/>
            <person name="McLay K."/>
            <person name="Mayes R."/>
            <person name="Pettett A."/>
            <person name="Rajandream M.A."/>
            <person name="Lyne M."/>
            <person name="Benes V."/>
            <person name="Rechmann S."/>
            <person name="Borkova D."/>
            <person name="Bloecker H."/>
            <person name="Scharfe M."/>
            <person name="Grimm M."/>
            <person name="Loehnert T.-H."/>
            <person name="Dose S."/>
            <person name="de Haan M."/>
            <person name="Maarse A.C."/>
            <person name="Schaefer M."/>
            <person name="Mueller-Auer S."/>
            <person name="Gabel C."/>
            <person name="Fuchs M."/>
            <person name="Fartmann B."/>
            <person name="Granderath K."/>
            <person name="Dauner D."/>
            <person name="Herzl A."/>
            <person name="Neumann S."/>
            <person name="Argiriou A."/>
            <person name="Vitale D."/>
            <person name="Liguori R."/>
            <person name="Piravandi E."/>
            <person name="Massenet O."/>
            <person name="Quigley F."/>
            <person name="Clabauld G."/>
            <person name="Muendlein A."/>
            <person name="Felber R."/>
            <person name="Schnabl S."/>
            <person name="Hiller R."/>
            <person name="Schmidt W."/>
            <person name="Lecharny A."/>
            <person name="Aubourg S."/>
            <person name="Chefdor F."/>
            <person name="Cooke R."/>
            <person name="Berger C."/>
            <person name="Monfort A."/>
            <person name="Casacuberta E."/>
            <person name="Gibbons T."/>
            <person name="Weber N."/>
            <person name="Vandenbol M."/>
            <person name="Bargues M."/>
            <person name="Terol J."/>
            <person name="Torres A."/>
            <person name="Perez-Perez A."/>
            <person name="Purnelle B."/>
            <person name="Bent E."/>
            <person name="Johnson S."/>
            <person name="Tacon D."/>
            <person name="Jesse T."/>
            <person name="Heijnen L."/>
            <person name="Schwarz S."/>
            <person name="Scholler P."/>
            <person name="Heber S."/>
            <person name="Francs P."/>
            <person name="Bielke C."/>
            <person name="Frishman D."/>
            <person name="Haase D."/>
            <person name="Lemcke K."/>
            <person name="Mewes H.-W."/>
            <person name="Stocker S."/>
            <person name="Zaccaria P."/>
            <person name="Bevan M."/>
            <person name="Wilson R.K."/>
            <person name="de la Bastide M."/>
            <person name="Habermann K."/>
            <person name="Parnell L."/>
            <person name="Dedhia N."/>
            <person name="Gnoj L."/>
            <person name="Schutz K."/>
            <person name="Huang E."/>
            <person name="Spiegel L."/>
            <person name="Sekhon M."/>
            <person name="Murray J."/>
            <person name="Sheet P."/>
            <person name="Cordes M."/>
            <person name="Abu-Threideh J."/>
            <person name="Stoneking T."/>
            <person name="Kalicki J."/>
            <person name="Graves T."/>
            <person name="Harmon G."/>
            <person name="Edwards J."/>
            <person name="Latreille P."/>
            <person name="Courtney L."/>
            <person name="Cloud J."/>
            <person name="Abbott A."/>
            <person name="Scott K."/>
            <person name="Johnson D."/>
            <person name="Minx P."/>
            <person name="Bentley D."/>
            <person name="Fulton B."/>
            <person name="Miller N."/>
            <person name="Greco T."/>
            <person name="Kemp K."/>
            <person name="Kramer J."/>
            <person name="Fulton L."/>
            <person name="Mardis E."/>
            <person name="Dante M."/>
            <person name="Pepin K."/>
            <person name="Hillier L.W."/>
            <person name="Nelson J."/>
            <person name="Spieth J."/>
            <person name="Ryan E."/>
            <person name="Andrews S."/>
            <person name="Geisel C."/>
            <person name="Layman D."/>
            <person name="Du H."/>
            <person name="Ali J."/>
            <person name="Berghoff A."/>
            <person name="Jones K."/>
            <person name="Drone K."/>
            <person name="Cotton M."/>
            <person name="Joshu C."/>
            <person name="Antonoiu B."/>
            <person name="Zidanic M."/>
            <person name="Strong C."/>
            <person name="Sun H."/>
            <person name="Lamar B."/>
            <person name="Yordan C."/>
            <person name="Ma P."/>
            <person name="Zhong J."/>
            <person name="Preston R."/>
            <person name="Vil D."/>
            <person name="Shekher M."/>
            <person name="Matero A."/>
            <person name="Shah R."/>
            <person name="Swaby I.K."/>
            <person name="O'Shaughnessy A."/>
            <person name="Rodriguez M."/>
            <person name="Hoffman J."/>
            <person name="Till S."/>
            <person name="Granat S."/>
            <person name="Shohdy N."/>
            <person name="Hasegawa A."/>
            <person name="Hameed A."/>
            <person name="Lodhi M."/>
            <person name="Johnson A."/>
            <person name="Chen E."/>
            <person name="Marra M.A."/>
            <person name="Martienssen R."/>
            <person name="McCombie W.R."/>
        </authorList>
    </citation>
    <scope>NUCLEOTIDE SEQUENCE [LARGE SCALE GENOMIC DNA]</scope>
    <source>
        <strain>cv. Columbia</strain>
    </source>
</reference>
<reference key="2">
    <citation type="journal article" date="2017" name="Plant J.">
        <title>Araport11: a complete reannotation of the Arabidopsis thaliana reference genome.</title>
        <authorList>
            <person name="Cheng C.Y."/>
            <person name="Krishnakumar V."/>
            <person name="Chan A.P."/>
            <person name="Thibaud-Nissen F."/>
            <person name="Schobel S."/>
            <person name="Town C.D."/>
        </authorList>
    </citation>
    <scope>GENOME REANNOTATION</scope>
    <source>
        <strain>cv. Columbia</strain>
    </source>
</reference>
<reference key="3">
    <citation type="journal article" date="2003" name="Science">
        <title>Empirical analysis of transcriptional activity in the Arabidopsis genome.</title>
        <authorList>
            <person name="Yamada K."/>
            <person name="Lim J."/>
            <person name="Dale J.M."/>
            <person name="Chen H."/>
            <person name="Shinn P."/>
            <person name="Palm C.J."/>
            <person name="Southwick A.M."/>
            <person name="Wu H.C."/>
            <person name="Kim C.J."/>
            <person name="Nguyen M."/>
            <person name="Pham P.K."/>
            <person name="Cheuk R.F."/>
            <person name="Karlin-Newmann G."/>
            <person name="Liu S.X."/>
            <person name="Lam B."/>
            <person name="Sakano H."/>
            <person name="Wu T."/>
            <person name="Yu G."/>
            <person name="Miranda M."/>
            <person name="Quach H.L."/>
            <person name="Tripp M."/>
            <person name="Chang C.H."/>
            <person name="Lee J.M."/>
            <person name="Toriumi M.J."/>
            <person name="Chan M.M."/>
            <person name="Tang C.C."/>
            <person name="Onodera C.S."/>
            <person name="Deng J.M."/>
            <person name="Akiyama K."/>
            <person name="Ansari Y."/>
            <person name="Arakawa T."/>
            <person name="Banh J."/>
            <person name="Banno F."/>
            <person name="Bowser L."/>
            <person name="Brooks S.Y."/>
            <person name="Carninci P."/>
            <person name="Chao Q."/>
            <person name="Choy N."/>
            <person name="Enju A."/>
            <person name="Goldsmith A.D."/>
            <person name="Gurjal M."/>
            <person name="Hansen N.F."/>
            <person name="Hayashizaki Y."/>
            <person name="Johnson-Hopson C."/>
            <person name="Hsuan V.W."/>
            <person name="Iida K."/>
            <person name="Karnes M."/>
            <person name="Khan S."/>
            <person name="Koesema E."/>
            <person name="Ishida J."/>
            <person name="Jiang P.X."/>
            <person name="Jones T."/>
            <person name="Kawai J."/>
            <person name="Kamiya A."/>
            <person name="Meyers C."/>
            <person name="Nakajima M."/>
            <person name="Narusaka M."/>
            <person name="Seki M."/>
            <person name="Sakurai T."/>
            <person name="Satou M."/>
            <person name="Tamse R."/>
            <person name="Vaysberg M."/>
            <person name="Wallender E.K."/>
            <person name="Wong C."/>
            <person name="Yamamura Y."/>
            <person name="Yuan S."/>
            <person name="Shinozaki K."/>
            <person name="Davis R.W."/>
            <person name="Theologis A."/>
            <person name="Ecker J.R."/>
        </authorList>
    </citation>
    <scope>NUCLEOTIDE SEQUENCE [LARGE SCALE MRNA]</scope>
    <source>
        <strain>cv. Columbia</strain>
    </source>
</reference>
<reference key="4">
    <citation type="submission" date="2002-03" db="EMBL/GenBank/DDBJ databases">
        <title>Full-length cDNA from Arabidopsis thaliana.</title>
        <authorList>
            <person name="Brover V.V."/>
            <person name="Troukhan M.E."/>
            <person name="Alexandrov N.A."/>
            <person name="Lu Y.-P."/>
            <person name="Flavell R.B."/>
            <person name="Feldmann K.A."/>
        </authorList>
    </citation>
    <scope>NUCLEOTIDE SEQUENCE [LARGE SCALE MRNA]</scope>
</reference>
<reference key="5">
    <citation type="journal article" date="2012" name="Plant Physiol.">
        <title>Isolation and proteomic characterization of the Arabidopsis Golgi defines functional and novel components involved in plant cell wall biosynthesis.</title>
        <authorList>
            <person name="Parsons H.T."/>
            <person name="Christiansen K."/>
            <person name="Knierim B."/>
            <person name="Carroll A."/>
            <person name="Ito J."/>
            <person name="Batth T.S."/>
            <person name="Smith-Moritz A.M."/>
            <person name="Morrison S."/>
            <person name="McInerney P."/>
            <person name="Hadi M.Z."/>
            <person name="Auer M."/>
            <person name="Mukhopadhyay A."/>
            <person name="Petzold C.J."/>
            <person name="Scheller H.V."/>
            <person name="Loque D."/>
            <person name="Heazlewood J.L."/>
        </authorList>
    </citation>
    <scope>SUBCELLULAR LOCATION</scope>
</reference>
<reference key="6">
    <citation type="journal article" date="2007" name="Physiol. Plantarum">
        <title>Arabidopsis prolyl 4-hydroxylases are differentially expressed in response to hypoxia, anoxia and mechanical wounding.</title>
        <authorList>
            <person name="Vlad F."/>
            <person name="Spano T."/>
            <person name="Vlad D."/>
            <person name="Bou Daher F."/>
            <person name="Ouelhadj A."/>
            <person name="Kalaitzis P."/>
        </authorList>
    </citation>
    <scope>GENE FAMILY</scope>
    <scope>NOMENCLATURE</scope>
</reference>
<gene>
    <name evidence="7" type="primary">P4H9</name>
    <name type="ordered locus">At4g33910</name>
    <name type="ORF">F17I5.100</name>
</gene>
<dbReference type="EC" id="1.14.11.2" evidence="8"/>
<dbReference type="EMBL" id="AL031032">
    <property type="protein sequence ID" value="CAA19873.1"/>
    <property type="status" value="ALT_SEQ"/>
    <property type="molecule type" value="Genomic_DNA"/>
</dbReference>
<dbReference type="EMBL" id="AL161584">
    <property type="protein sequence ID" value="CAB80108.1"/>
    <property type="status" value="ALT_SEQ"/>
    <property type="molecule type" value="Genomic_DNA"/>
</dbReference>
<dbReference type="EMBL" id="CP002687">
    <property type="protein sequence ID" value="AEE86292.1"/>
    <property type="molecule type" value="Genomic_DNA"/>
</dbReference>
<dbReference type="EMBL" id="AY064069">
    <property type="protein sequence ID" value="AAL36425.1"/>
    <property type="molecule type" value="mRNA"/>
</dbReference>
<dbReference type="EMBL" id="AY096377">
    <property type="protein sequence ID" value="AAM20018.1"/>
    <property type="molecule type" value="mRNA"/>
</dbReference>
<dbReference type="EMBL" id="AY086254">
    <property type="protein sequence ID" value="AAM64328.1"/>
    <property type="molecule type" value="mRNA"/>
</dbReference>
<dbReference type="PIR" id="T05219">
    <property type="entry name" value="T05219"/>
</dbReference>
<dbReference type="RefSeq" id="NP_567941.1">
    <property type="nucleotide sequence ID" value="NM_119550.3"/>
</dbReference>
<dbReference type="SMR" id="Q8VZJ7"/>
<dbReference type="BioGRID" id="14817">
    <property type="interactions" value="1"/>
</dbReference>
<dbReference type="FunCoup" id="Q8VZJ7">
    <property type="interactions" value="590"/>
</dbReference>
<dbReference type="STRING" id="3702.Q8VZJ7"/>
<dbReference type="GlyCosmos" id="Q8VZJ7">
    <property type="glycosylation" value="2 sites, No reported glycans"/>
</dbReference>
<dbReference type="GlyGen" id="Q8VZJ7">
    <property type="glycosylation" value="2 sites"/>
</dbReference>
<dbReference type="PaxDb" id="3702-AT4G33910.1"/>
<dbReference type="ProteomicsDB" id="248813"/>
<dbReference type="EnsemblPlants" id="AT4G33910.1">
    <property type="protein sequence ID" value="AT4G33910.1"/>
    <property type="gene ID" value="AT4G33910"/>
</dbReference>
<dbReference type="GeneID" id="829535"/>
<dbReference type="Gramene" id="AT4G33910.1">
    <property type="protein sequence ID" value="AT4G33910.1"/>
    <property type="gene ID" value="AT4G33910"/>
</dbReference>
<dbReference type="KEGG" id="ath:AT4G33910"/>
<dbReference type="Araport" id="AT4G33910"/>
<dbReference type="TAIR" id="AT4G33910"/>
<dbReference type="eggNOG" id="KOG1591">
    <property type="taxonomic scope" value="Eukaryota"/>
</dbReference>
<dbReference type="HOGENOM" id="CLU_058132_1_1_1"/>
<dbReference type="InParanoid" id="Q8VZJ7"/>
<dbReference type="OMA" id="PRAIYFP"/>
<dbReference type="OrthoDB" id="420380at2759"/>
<dbReference type="PhylomeDB" id="Q8VZJ7"/>
<dbReference type="BioCyc" id="ARA:AT4G33910-MONOMER"/>
<dbReference type="PRO" id="PR:Q8VZJ7"/>
<dbReference type="Proteomes" id="UP000006548">
    <property type="component" value="Chromosome 4"/>
</dbReference>
<dbReference type="ExpressionAtlas" id="Q8VZJ7">
    <property type="expression patterns" value="baseline and differential"/>
</dbReference>
<dbReference type="GO" id="GO:0005789">
    <property type="term" value="C:endoplasmic reticulum membrane"/>
    <property type="evidence" value="ECO:0007669"/>
    <property type="project" value="UniProtKB-SubCell"/>
</dbReference>
<dbReference type="GO" id="GO:0005794">
    <property type="term" value="C:Golgi apparatus"/>
    <property type="evidence" value="ECO:0000314"/>
    <property type="project" value="TAIR"/>
</dbReference>
<dbReference type="GO" id="GO:0005797">
    <property type="term" value="C:Golgi medial cisterna"/>
    <property type="evidence" value="ECO:0007005"/>
    <property type="project" value="TAIR"/>
</dbReference>
<dbReference type="GO" id="GO:0005506">
    <property type="term" value="F:iron ion binding"/>
    <property type="evidence" value="ECO:0007669"/>
    <property type="project" value="InterPro"/>
</dbReference>
<dbReference type="GO" id="GO:0031418">
    <property type="term" value="F:L-ascorbic acid binding"/>
    <property type="evidence" value="ECO:0007669"/>
    <property type="project" value="InterPro"/>
</dbReference>
<dbReference type="GO" id="GO:0004656">
    <property type="term" value="F:procollagen-proline 4-dioxygenase activity"/>
    <property type="evidence" value="ECO:0007669"/>
    <property type="project" value="UniProtKB-EC"/>
</dbReference>
<dbReference type="FunFam" id="2.60.120.620:FF:000002">
    <property type="entry name" value="Prolyl 4-hydroxylase 4"/>
    <property type="match status" value="1"/>
</dbReference>
<dbReference type="Gene3D" id="2.60.120.620">
    <property type="entry name" value="q2cbj1_9rhob like domain"/>
    <property type="match status" value="1"/>
</dbReference>
<dbReference type="InterPro" id="IPR005123">
    <property type="entry name" value="Oxoglu/Fe-dep_dioxygenase_dom"/>
</dbReference>
<dbReference type="InterPro" id="IPR045054">
    <property type="entry name" value="P4HA-like"/>
</dbReference>
<dbReference type="InterPro" id="IPR006620">
    <property type="entry name" value="Pro_4_hyd_alph"/>
</dbReference>
<dbReference type="InterPro" id="IPR044862">
    <property type="entry name" value="Pro_4_hyd_alph_FE2OG_OXY"/>
</dbReference>
<dbReference type="PANTHER" id="PTHR10869:SF195">
    <property type="entry name" value="PROLYL 4-HYDROXYLASE 9-RELATED"/>
    <property type="match status" value="1"/>
</dbReference>
<dbReference type="PANTHER" id="PTHR10869">
    <property type="entry name" value="PROLYL 4-HYDROXYLASE ALPHA SUBUNIT"/>
    <property type="match status" value="1"/>
</dbReference>
<dbReference type="Pfam" id="PF13640">
    <property type="entry name" value="2OG-FeII_Oxy_3"/>
    <property type="match status" value="1"/>
</dbReference>
<dbReference type="SMART" id="SM00702">
    <property type="entry name" value="P4Hc"/>
    <property type="match status" value="1"/>
</dbReference>
<dbReference type="PROSITE" id="PS51471">
    <property type="entry name" value="FE2OG_OXY"/>
    <property type="match status" value="1"/>
</dbReference>
<name>P4H9_ARATH</name>
<evidence type="ECO:0000250" key="1">
    <source>
        <dbReference type="UniProtKB" id="F4ILF8"/>
    </source>
</evidence>
<evidence type="ECO:0000250" key="2">
    <source>
        <dbReference type="UniProtKB" id="Q86KR9"/>
    </source>
</evidence>
<evidence type="ECO:0000250" key="3">
    <source>
        <dbReference type="UniProtKB" id="Q9ZW86"/>
    </source>
</evidence>
<evidence type="ECO:0000255" key="4"/>
<evidence type="ECO:0000255" key="5">
    <source>
        <dbReference type="PROSITE-ProRule" id="PRU00498"/>
    </source>
</evidence>
<evidence type="ECO:0000255" key="6">
    <source>
        <dbReference type="PROSITE-ProRule" id="PRU00805"/>
    </source>
</evidence>
<evidence type="ECO:0000303" key="7">
    <source ref="6"/>
</evidence>
<evidence type="ECO:0000305" key="8"/>
<evidence type="ECO:0000305" key="9">
    <source>
    </source>
</evidence>
<organism>
    <name type="scientific">Arabidopsis thaliana</name>
    <name type="common">Mouse-ear cress</name>
    <dbReference type="NCBI Taxonomy" id="3702"/>
    <lineage>
        <taxon>Eukaryota</taxon>
        <taxon>Viridiplantae</taxon>
        <taxon>Streptophyta</taxon>
        <taxon>Embryophyta</taxon>
        <taxon>Tracheophyta</taxon>
        <taxon>Spermatophyta</taxon>
        <taxon>Magnoliopsida</taxon>
        <taxon>eudicotyledons</taxon>
        <taxon>Gunneridae</taxon>
        <taxon>Pentapetalae</taxon>
        <taxon>rosids</taxon>
        <taxon>malvids</taxon>
        <taxon>Brassicales</taxon>
        <taxon>Brassicaceae</taxon>
        <taxon>Camelineae</taxon>
        <taxon>Arabidopsis</taxon>
    </lineage>
</organism>
<sequence>MKSRLKSYRRKKLGLATVIVFCSLCFLFGFYGSTLLSQNVPRVKPRLRMLDMVENGEEEASSMPHGVTGEESIGSIPFQVLSWRPRAIYFPNFATAEQCQAIIERAKVNLKPSALALRKGETAENTKGTRTSSGTFISASEESTGALDFVERKIARATMIPRSHGESFNILRYELGQKYDSHYDVFNPTEYGPQSSQRIASFLLYLSDVEEGGETMFPFENGSNMGIGYDYKQCIGLKVKPRKGDGLLFYSVFPNGTIDQTSLHGSCPVTKGEKWVATKWIRDQDQEE</sequence>
<comment type="function">
    <text evidence="3">Catalyzes the post-translational formation of 4-hydroxyproline in -Xaa-Pro-Gly- sequences in proline-rich peptide sequences of plant glycoproteins and other proteins. Hydroxyprolines are important constituent of many plant cell wall glycoproteins such as extensins, hydroxyproline-rich glycoproteins, lectins and arabinogalactan proteins.</text>
</comment>
<comment type="catalytic activity">
    <reaction evidence="3">
        <text>L-prolyl-[collagen] + 2-oxoglutarate + O2 = trans-4-hydroxy-L-prolyl-[collagen] + succinate + CO2</text>
        <dbReference type="Rhea" id="RHEA:18945"/>
        <dbReference type="Rhea" id="RHEA-COMP:11676"/>
        <dbReference type="Rhea" id="RHEA-COMP:11680"/>
        <dbReference type="ChEBI" id="CHEBI:15379"/>
        <dbReference type="ChEBI" id="CHEBI:16526"/>
        <dbReference type="ChEBI" id="CHEBI:16810"/>
        <dbReference type="ChEBI" id="CHEBI:30031"/>
        <dbReference type="ChEBI" id="CHEBI:50342"/>
        <dbReference type="ChEBI" id="CHEBI:61965"/>
        <dbReference type="EC" id="1.14.11.2"/>
    </reaction>
</comment>
<comment type="cofactor">
    <cofactor evidence="6">
        <name>Fe(2+)</name>
        <dbReference type="ChEBI" id="CHEBI:29033"/>
    </cofactor>
    <text evidence="6">Binds 1 Fe(2+) ion per subunit.</text>
</comment>
<comment type="cofactor">
    <cofactor evidence="2">
        <name>L-ascorbate</name>
        <dbReference type="ChEBI" id="CHEBI:38290"/>
    </cofactor>
</comment>
<comment type="subcellular location">
    <subcellularLocation>
        <location evidence="1">Endoplasmic reticulum membrane</location>
        <topology evidence="1">Single-pass type II membrane protein</topology>
    </subcellularLocation>
    <subcellularLocation>
        <location evidence="9">Golgi apparatus</location>
    </subcellularLocation>
</comment>
<comment type="similarity">
    <text evidence="8">Belongs to the P4HA family.</text>
</comment>
<comment type="sequence caution" evidence="8">
    <conflict type="erroneous gene model prediction">
        <sequence resource="EMBL-CDS" id="CAA19873"/>
    </conflict>
</comment>
<comment type="sequence caution" evidence="8">
    <conflict type="erroneous gene model prediction">
        <sequence resource="EMBL-CDS" id="CAB80108"/>
    </conflict>
</comment>
<feature type="chain" id="PRO_0000429342" description="Probable prolyl 4-hydroxylase 9">
    <location>
        <begin position="1"/>
        <end position="288"/>
    </location>
</feature>
<feature type="topological domain" description="Cytoplasmic" evidence="8">
    <location>
        <begin position="1"/>
        <end position="12"/>
    </location>
</feature>
<feature type="transmembrane region" description="Helical; Signal-anchor for type II membrane protein" evidence="4">
    <location>
        <begin position="13"/>
        <end position="33"/>
    </location>
</feature>
<feature type="topological domain" description="Lumenal" evidence="8">
    <location>
        <begin position="34"/>
        <end position="288"/>
    </location>
</feature>
<feature type="domain" description="Fe2OG dioxygenase" evidence="6">
    <location>
        <begin position="164"/>
        <end position="283"/>
    </location>
</feature>
<feature type="binding site" evidence="6">
    <location>
        <position position="182"/>
    </location>
    <ligand>
        <name>Fe cation</name>
        <dbReference type="ChEBI" id="CHEBI:24875"/>
    </ligand>
</feature>
<feature type="binding site" evidence="6">
    <location>
        <position position="184"/>
    </location>
    <ligand>
        <name>Fe cation</name>
        <dbReference type="ChEBI" id="CHEBI:24875"/>
    </ligand>
</feature>
<feature type="binding site" evidence="6">
    <location>
        <position position="264"/>
    </location>
    <ligand>
        <name>Fe cation</name>
        <dbReference type="ChEBI" id="CHEBI:24875"/>
    </ligand>
</feature>
<feature type="binding site" evidence="6">
    <location>
        <position position="274"/>
    </location>
    <ligand>
        <name>2-oxoglutarate</name>
        <dbReference type="ChEBI" id="CHEBI:16810"/>
    </ligand>
</feature>
<feature type="glycosylation site" description="N-linked (GlcNAc...) asparagine" evidence="5">
    <location>
        <position position="221"/>
    </location>
</feature>
<feature type="glycosylation site" description="N-linked (GlcNAc...) asparagine" evidence="5">
    <location>
        <position position="255"/>
    </location>
</feature>
<keyword id="KW-0223">Dioxygenase</keyword>
<keyword id="KW-0256">Endoplasmic reticulum</keyword>
<keyword id="KW-0325">Glycoprotein</keyword>
<keyword id="KW-0333">Golgi apparatus</keyword>
<keyword id="KW-0408">Iron</keyword>
<keyword id="KW-0472">Membrane</keyword>
<keyword id="KW-0479">Metal-binding</keyword>
<keyword id="KW-0560">Oxidoreductase</keyword>
<keyword id="KW-1185">Reference proteome</keyword>
<keyword id="KW-0735">Signal-anchor</keyword>
<keyword id="KW-0812">Transmembrane</keyword>
<keyword id="KW-1133">Transmembrane helix</keyword>
<accession>Q8VZJ7</accession>
<accession>O81759</accession>